<name>RL135_PLAVT</name>
<feature type="signal peptide" evidence="1">
    <location>
        <begin position="1"/>
        <end position="20"/>
    </location>
</feature>
<feature type="chain" id="PRO_0000447966" description="Secreted RxLR effector protein 135">
    <location>
        <begin position="21"/>
        <end position="163"/>
    </location>
</feature>
<feature type="region of interest" description="Disordered" evidence="2">
    <location>
        <begin position="94"/>
        <end position="127"/>
    </location>
</feature>
<feature type="short sequence motif" description="RxLR-dEER" evidence="6">
    <location>
        <begin position="33"/>
        <end position="45"/>
    </location>
</feature>
<protein>
    <recommendedName>
        <fullName evidence="4">Secreted RxLR effector protein 135</fullName>
    </recommendedName>
</protein>
<sequence>MRRLYLFVLILATFLTTSHGIVDASQDFQHLRRGLQEEAGEDEERIKLSGFKLPKSFGKRFKQKLSTKTKAFATRAASRMFQKKKGPLYGKYYKNAGKPKRQTPQIAATGPAKPKVQSPEEAAAVPGPYGQSLEYRVAQKVPLREREAFNPAKLSKINEMIPV</sequence>
<organism>
    <name type="scientific">Plasmopara viticola</name>
    <name type="common">Downy mildew of grapevine</name>
    <name type="synonym">Botrytis viticola</name>
    <dbReference type="NCBI Taxonomy" id="143451"/>
    <lineage>
        <taxon>Eukaryota</taxon>
        <taxon>Sar</taxon>
        <taxon>Stramenopiles</taxon>
        <taxon>Oomycota</taxon>
        <taxon>Peronosporales</taxon>
        <taxon>Peronosporaceae</taxon>
        <taxon>Plasmopara</taxon>
    </lineage>
</organism>
<accession>P0CV56</accession>
<keyword id="KW-1035">Host cytoplasm</keyword>
<keyword id="KW-1048">Host nucleus</keyword>
<keyword id="KW-0964">Secreted</keyword>
<keyword id="KW-0732">Signal</keyword>
<keyword id="KW-0843">Virulence</keyword>
<proteinExistence type="evidence at transcript level"/>
<reference key="1">
    <citation type="journal article" date="2018" name="Front. Plant Sci.">
        <title>In planta functional analysis and subcellular localization of the oomycete pathogen Plasmopara viticola candidate RXLR effector repertoire.</title>
        <authorList>
            <person name="Liu Y."/>
            <person name="Lan X."/>
            <person name="Song S."/>
            <person name="Yin L."/>
            <person name="Dry I.B."/>
            <person name="Qu J."/>
            <person name="Xiang J."/>
            <person name="Lu J."/>
        </authorList>
    </citation>
    <scope>NUCLEOTIDE SEQUENCE [MRNA]</scope>
    <scope>DOMAIN</scope>
    <scope>FUNCTION</scope>
    <scope>SUBCELLULAR LOCATION</scope>
</reference>
<evidence type="ECO:0000255" key="1"/>
<evidence type="ECO:0000256" key="2">
    <source>
        <dbReference type="SAM" id="MobiDB-lite"/>
    </source>
</evidence>
<evidence type="ECO:0000269" key="3">
    <source>
    </source>
</evidence>
<evidence type="ECO:0000303" key="4">
    <source>
    </source>
</evidence>
<evidence type="ECO:0000305" key="5"/>
<evidence type="ECO:0000305" key="6">
    <source>
    </source>
</evidence>
<gene>
    <name evidence="4" type="primary">RXLR135</name>
</gene>
<comment type="function">
    <text evidence="3">Secreted effector that completely suppresses the host cell death induced by cell death-inducing proteins.</text>
</comment>
<comment type="subcellular location">
    <subcellularLocation>
        <location evidence="3">Secreted</location>
    </subcellularLocation>
    <subcellularLocation>
        <location evidence="3">Host nucleus</location>
    </subcellularLocation>
    <subcellularLocation>
        <location evidence="3">Host cytoplasm</location>
    </subcellularLocation>
</comment>
<comment type="domain">
    <text evidence="6">The RxLR-dEER motif acts to carry the protein into the host cell cytoplasm through binding to cell surface phosphatidylinositol-3-phosphate.</text>
</comment>
<comment type="similarity">
    <text evidence="5">Belongs to the RxLR effector family.</text>
</comment>
<dbReference type="SMR" id="P0CV56"/>
<dbReference type="GO" id="GO:0005576">
    <property type="term" value="C:extracellular region"/>
    <property type="evidence" value="ECO:0007669"/>
    <property type="project" value="UniProtKB-SubCell"/>
</dbReference>
<dbReference type="GO" id="GO:0030430">
    <property type="term" value="C:host cell cytoplasm"/>
    <property type="evidence" value="ECO:0007669"/>
    <property type="project" value="UniProtKB-SubCell"/>
</dbReference>
<dbReference type="GO" id="GO:0042025">
    <property type="term" value="C:host cell nucleus"/>
    <property type="evidence" value="ECO:0007669"/>
    <property type="project" value="UniProtKB-SubCell"/>
</dbReference>